<gene>
    <name evidence="1" type="primary">hisG</name>
    <name type="ordered locus">Rmet_3249</name>
</gene>
<accession>Q1LIA5</accession>
<reference key="1">
    <citation type="journal article" date="2010" name="PLoS ONE">
        <title>The complete genome sequence of Cupriavidus metallidurans strain CH34, a master survivalist in harsh and anthropogenic environments.</title>
        <authorList>
            <person name="Janssen P.J."/>
            <person name="Van Houdt R."/>
            <person name="Moors H."/>
            <person name="Monsieurs P."/>
            <person name="Morin N."/>
            <person name="Michaux A."/>
            <person name="Benotmane M.A."/>
            <person name="Leys N."/>
            <person name="Vallaeys T."/>
            <person name="Lapidus A."/>
            <person name="Monchy S."/>
            <person name="Medigue C."/>
            <person name="Taghavi S."/>
            <person name="McCorkle S."/>
            <person name="Dunn J."/>
            <person name="van der Lelie D."/>
            <person name="Mergeay M."/>
        </authorList>
    </citation>
    <scope>NUCLEOTIDE SEQUENCE [LARGE SCALE GENOMIC DNA]</scope>
    <source>
        <strain>ATCC 43123 / DSM 2839 / NBRC 102507 / CH34</strain>
    </source>
</reference>
<name>HIS1_CUPMC</name>
<organism>
    <name type="scientific">Cupriavidus metallidurans (strain ATCC 43123 / DSM 2839 / NBRC 102507 / CH34)</name>
    <name type="common">Ralstonia metallidurans</name>
    <dbReference type="NCBI Taxonomy" id="266264"/>
    <lineage>
        <taxon>Bacteria</taxon>
        <taxon>Pseudomonadati</taxon>
        <taxon>Pseudomonadota</taxon>
        <taxon>Betaproteobacteria</taxon>
        <taxon>Burkholderiales</taxon>
        <taxon>Burkholderiaceae</taxon>
        <taxon>Cupriavidus</taxon>
    </lineage>
</organism>
<feature type="chain" id="PRO_1000063303" description="ATP phosphoribosyltransferase">
    <location>
        <begin position="1"/>
        <end position="224"/>
    </location>
</feature>
<sequence length="224" mass="23953">MSPAFNASPDQLTLALSKGRIFKETLPLLAAAGIQVTEDPETSRKLILPTSDPAVRVIIVRASDVPTYVQYGAADFGVAGKDVLMEHGMAGLYAPIDLNIARCRMSVAVPAGFDYVNAVRQGARLAVATKYVQTAREHFAKKGVHVDLIKLYGSMELGPLVGLSDAIVDLVSTGSTLRANNLVEVEEIVQISSRLVVNQAALKLKRERLAPILDAFERASAALA</sequence>
<comment type="function">
    <text evidence="1">Catalyzes the condensation of ATP and 5-phosphoribose 1-diphosphate to form N'-(5'-phosphoribosyl)-ATP (PR-ATP). Has a crucial role in the pathway because the rate of histidine biosynthesis seems to be controlled primarily by regulation of HisG enzymatic activity.</text>
</comment>
<comment type="catalytic activity">
    <reaction evidence="1">
        <text>1-(5-phospho-beta-D-ribosyl)-ATP + diphosphate = 5-phospho-alpha-D-ribose 1-diphosphate + ATP</text>
        <dbReference type="Rhea" id="RHEA:18473"/>
        <dbReference type="ChEBI" id="CHEBI:30616"/>
        <dbReference type="ChEBI" id="CHEBI:33019"/>
        <dbReference type="ChEBI" id="CHEBI:58017"/>
        <dbReference type="ChEBI" id="CHEBI:73183"/>
        <dbReference type="EC" id="2.4.2.17"/>
    </reaction>
</comment>
<comment type="pathway">
    <text evidence="1">Amino-acid biosynthesis; L-histidine biosynthesis; L-histidine from 5-phospho-alpha-D-ribose 1-diphosphate: step 1/9.</text>
</comment>
<comment type="subunit">
    <text evidence="1">Heteromultimer composed of HisG and HisZ subunits.</text>
</comment>
<comment type="subcellular location">
    <subcellularLocation>
        <location evidence="1">Cytoplasm</location>
    </subcellularLocation>
</comment>
<comment type="domain">
    <text>Lacks the C-terminal regulatory region which is replaced by HisZ.</text>
</comment>
<comment type="similarity">
    <text evidence="1">Belongs to the ATP phosphoribosyltransferase family. Short subfamily.</text>
</comment>
<proteinExistence type="inferred from homology"/>
<keyword id="KW-0028">Amino-acid biosynthesis</keyword>
<keyword id="KW-0067">ATP-binding</keyword>
<keyword id="KW-0963">Cytoplasm</keyword>
<keyword id="KW-0328">Glycosyltransferase</keyword>
<keyword id="KW-0368">Histidine biosynthesis</keyword>
<keyword id="KW-0547">Nucleotide-binding</keyword>
<keyword id="KW-1185">Reference proteome</keyword>
<keyword id="KW-0808">Transferase</keyword>
<dbReference type="EC" id="2.4.2.17" evidence="1"/>
<dbReference type="EMBL" id="CP000352">
    <property type="protein sequence ID" value="ABF10121.1"/>
    <property type="molecule type" value="Genomic_DNA"/>
</dbReference>
<dbReference type="RefSeq" id="WP_008643045.1">
    <property type="nucleotide sequence ID" value="NC_007973.1"/>
</dbReference>
<dbReference type="SMR" id="Q1LIA5"/>
<dbReference type="STRING" id="266264.Rmet_3249"/>
<dbReference type="GeneID" id="60825573"/>
<dbReference type="KEGG" id="rme:Rmet_3249"/>
<dbReference type="eggNOG" id="COG0040">
    <property type="taxonomic scope" value="Bacteria"/>
</dbReference>
<dbReference type="HOGENOM" id="CLU_038115_2_0_4"/>
<dbReference type="UniPathway" id="UPA00031">
    <property type="reaction ID" value="UER00006"/>
</dbReference>
<dbReference type="Proteomes" id="UP000002429">
    <property type="component" value="Chromosome"/>
</dbReference>
<dbReference type="GO" id="GO:0005737">
    <property type="term" value="C:cytoplasm"/>
    <property type="evidence" value="ECO:0007669"/>
    <property type="project" value="UniProtKB-SubCell"/>
</dbReference>
<dbReference type="GO" id="GO:0005524">
    <property type="term" value="F:ATP binding"/>
    <property type="evidence" value="ECO:0007669"/>
    <property type="project" value="UniProtKB-KW"/>
</dbReference>
<dbReference type="GO" id="GO:0003879">
    <property type="term" value="F:ATP phosphoribosyltransferase activity"/>
    <property type="evidence" value="ECO:0007669"/>
    <property type="project" value="UniProtKB-UniRule"/>
</dbReference>
<dbReference type="GO" id="GO:0000105">
    <property type="term" value="P:L-histidine biosynthetic process"/>
    <property type="evidence" value="ECO:0007669"/>
    <property type="project" value="UniProtKB-UniRule"/>
</dbReference>
<dbReference type="CDD" id="cd13595">
    <property type="entry name" value="PBP2_HisGs"/>
    <property type="match status" value="1"/>
</dbReference>
<dbReference type="FunFam" id="3.40.190.10:FF:000008">
    <property type="entry name" value="ATP phosphoribosyltransferase"/>
    <property type="match status" value="1"/>
</dbReference>
<dbReference type="FunFam" id="3.40.190.10:FF:000011">
    <property type="entry name" value="ATP phosphoribosyltransferase"/>
    <property type="match status" value="1"/>
</dbReference>
<dbReference type="Gene3D" id="3.40.190.10">
    <property type="entry name" value="Periplasmic binding protein-like II"/>
    <property type="match status" value="2"/>
</dbReference>
<dbReference type="HAMAP" id="MF_01018">
    <property type="entry name" value="HisG_Short"/>
    <property type="match status" value="1"/>
</dbReference>
<dbReference type="InterPro" id="IPR013820">
    <property type="entry name" value="ATP_PRibTrfase_cat"/>
</dbReference>
<dbReference type="InterPro" id="IPR018198">
    <property type="entry name" value="ATP_PRibTrfase_CS"/>
</dbReference>
<dbReference type="InterPro" id="IPR001348">
    <property type="entry name" value="ATP_PRibTrfase_HisG"/>
</dbReference>
<dbReference type="InterPro" id="IPR024893">
    <property type="entry name" value="ATP_PRibTrfase_HisG_short"/>
</dbReference>
<dbReference type="NCBIfam" id="TIGR00070">
    <property type="entry name" value="hisG"/>
    <property type="match status" value="1"/>
</dbReference>
<dbReference type="PANTHER" id="PTHR21403:SF8">
    <property type="entry name" value="ATP PHOSPHORIBOSYLTRANSFERASE"/>
    <property type="match status" value="1"/>
</dbReference>
<dbReference type="PANTHER" id="PTHR21403">
    <property type="entry name" value="ATP PHOSPHORIBOSYLTRANSFERASE ATP-PRTASE"/>
    <property type="match status" value="1"/>
</dbReference>
<dbReference type="Pfam" id="PF01634">
    <property type="entry name" value="HisG"/>
    <property type="match status" value="1"/>
</dbReference>
<dbReference type="SUPFAM" id="SSF53850">
    <property type="entry name" value="Periplasmic binding protein-like II"/>
    <property type="match status" value="1"/>
</dbReference>
<dbReference type="PROSITE" id="PS01316">
    <property type="entry name" value="ATP_P_PHORIBOSYLTR"/>
    <property type="match status" value="1"/>
</dbReference>
<evidence type="ECO:0000255" key="1">
    <source>
        <dbReference type="HAMAP-Rule" id="MF_01018"/>
    </source>
</evidence>
<protein>
    <recommendedName>
        <fullName evidence="1">ATP phosphoribosyltransferase</fullName>
        <shortName evidence="1">ATP-PRT</shortName>
        <shortName evidence="1">ATP-PRTase</shortName>
        <ecNumber evidence="1">2.4.2.17</ecNumber>
    </recommendedName>
</protein>